<name>MURI_CLOBM</name>
<accession>B1KTG4</accession>
<feature type="chain" id="PRO_1000114039" description="Glutamate racemase">
    <location>
        <begin position="1"/>
        <end position="257"/>
    </location>
</feature>
<feature type="active site" description="Proton donor/acceptor" evidence="1">
    <location>
        <position position="75"/>
    </location>
</feature>
<feature type="active site" description="Proton donor/acceptor" evidence="1">
    <location>
        <position position="185"/>
    </location>
</feature>
<feature type="binding site" evidence="1">
    <location>
        <begin position="12"/>
        <end position="13"/>
    </location>
    <ligand>
        <name>substrate</name>
    </ligand>
</feature>
<feature type="binding site" evidence="1">
    <location>
        <begin position="44"/>
        <end position="45"/>
    </location>
    <ligand>
        <name>substrate</name>
    </ligand>
</feature>
<feature type="binding site" evidence="1">
    <location>
        <begin position="76"/>
        <end position="77"/>
    </location>
    <ligand>
        <name>substrate</name>
    </ligand>
</feature>
<feature type="binding site" evidence="1">
    <location>
        <begin position="186"/>
        <end position="187"/>
    </location>
    <ligand>
        <name>substrate</name>
    </ligand>
</feature>
<protein>
    <recommendedName>
        <fullName evidence="1">Glutamate racemase</fullName>
        <ecNumber evidence="1">5.1.1.3</ecNumber>
    </recommendedName>
</protein>
<sequence>MNINDKPIGFFDSGVGGISVLKEAFKLLPKEDFLYYGDSKNAPYGTKKVEEVKTLTFNATDFLMNKGIKALVVACNTATSVTINDLRENYDIPIIGIEPALKPAVELKKGGKIIIMATPMTLAEKKFANLMDLYKETEDIEPLPCPGLPELIEQGIVSGDVIYNYLKDKFSKYDNEKISSIVLGCTHYPFIEETLKEVTHNKACIIDGSFGTSRELKRQLKNSNMLREENRVGKVTIFNSREDRDIIDLSYKLFNMK</sequence>
<gene>
    <name evidence="1" type="primary">murI</name>
    <name type="ordered locus">CLK_3032</name>
</gene>
<keyword id="KW-0133">Cell shape</keyword>
<keyword id="KW-0961">Cell wall biogenesis/degradation</keyword>
<keyword id="KW-0413">Isomerase</keyword>
<keyword id="KW-0573">Peptidoglycan synthesis</keyword>
<proteinExistence type="inferred from homology"/>
<comment type="function">
    <text evidence="1">Provides the (R)-glutamate required for cell wall biosynthesis.</text>
</comment>
<comment type="catalytic activity">
    <reaction evidence="1">
        <text>L-glutamate = D-glutamate</text>
        <dbReference type="Rhea" id="RHEA:12813"/>
        <dbReference type="ChEBI" id="CHEBI:29985"/>
        <dbReference type="ChEBI" id="CHEBI:29986"/>
        <dbReference type="EC" id="5.1.1.3"/>
    </reaction>
</comment>
<comment type="pathway">
    <text evidence="1">Cell wall biogenesis; peptidoglycan biosynthesis.</text>
</comment>
<comment type="similarity">
    <text evidence="1">Belongs to the aspartate/glutamate racemases family.</text>
</comment>
<evidence type="ECO:0000255" key="1">
    <source>
        <dbReference type="HAMAP-Rule" id="MF_00258"/>
    </source>
</evidence>
<reference key="1">
    <citation type="journal article" date="2007" name="PLoS ONE">
        <title>Analysis of the neurotoxin complex genes in Clostridium botulinum A1-A4 and B1 strains: BoNT/A3, /Ba4 and /B1 clusters are located within plasmids.</title>
        <authorList>
            <person name="Smith T.J."/>
            <person name="Hill K.K."/>
            <person name="Foley B.T."/>
            <person name="Detter J.C."/>
            <person name="Munk A.C."/>
            <person name="Bruce D.C."/>
            <person name="Doggett N.A."/>
            <person name="Smith L.A."/>
            <person name="Marks J.D."/>
            <person name="Xie G."/>
            <person name="Brettin T.S."/>
        </authorList>
    </citation>
    <scope>NUCLEOTIDE SEQUENCE [LARGE SCALE GENOMIC DNA]</scope>
    <source>
        <strain>Loch Maree / Type A3</strain>
    </source>
</reference>
<dbReference type="EC" id="5.1.1.3" evidence="1"/>
<dbReference type="EMBL" id="CP000962">
    <property type="protein sequence ID" value="ACA53721.1"/>
    <property type="molecule type" value="Genomic_DNA"/>
</dbReference>
<dbReference type="RefSeq" id="WP_012341914.1">
    <property type="nucleotide sequence ID" value="NC_010520.1"/>
</dbReference>
<dbReference type="SMR" id="B1KTG4"/>
<dbReference type="KEGG" id="cbl:CLK_3032"/>
<dbReference type="HOGENOM" id="CLU_052344_1_0_9"/>
<dbReference type="UniPathway" id="UPA00219"/>
<dbReference type="GO" id="GO:0008881">
    <property type="term" value="F:glutamate racemase activity"/>
    <property type="evidence" value="ECO:0007669"/>
    <property type="project" value="UniProtKB-UniRule"/>
</dbReference>
<dbReference type="GO" id="GO:0071555">
    <property type="term" value="P:cell wall organization"/>
    <property type="evidence" value="ECO:0007669"/>
    <property type="project" value="UniProtKB-KW"/>
</dbReference>
<dbReference type="GO" id="GO:0009252">
    <property type="term" value="P:peptidoglycan biosynthetic process"/>
    <property type="evidence" value="ECO:0007669"/>
    <property type="project" value="UniProtKB-UniRule"/>
</dbReference>
<dbReference type="GO" id="GO:0008360">
    <property type="term" value="P:regulation of cell shape"/>
    <property type="evidence" value="ECO:0007669"/>
    <property type="project" value="UniProtKB-KW"/>
</dbReference>
<dbReference type="FunFam" id="3.40.50.1860:FF:000002">
    <property type="entry name" value="Glutamate racemase"/>
    <property type="match status" value="1"/>
</dbReference>
<dbReference type="Gene3D" id="3.40.50.1860">
    <property type="match status" value="2"/>
</dbReference>
<dbReference type="HAMAP" id="MF_00258">
    <property type="entry name" value="Glu_racemase"/>
    <property type="match status" value="1"/>
</dbReference>
<dbReference type="InterPro" id="IPR015942">
    <property type="entry name" value="Asp/Glu/hydantoin_racemase"/>
</dbReference>
<dbReference type="InterPro" id="IPR001920">
    <property type="entry name" value="Asp/Glu_race"/>
</dbReference>
<dbReference type="InterPro" id="IPR018187">
    <property type="entry name" value="Asp/Glu_racemase_AS_1"/>
</dbReference>
<dbReference type="InterPro" id="IPR033134">
    <property type="entry name" value="Asp/Glu_racemase_AS_2"/>
</dbReference>
<dbReference type="InterPro" id="IPR004391">
    <property type="entry name" value="Glu_race"/>
</dbReference>
<dbReference type="NCBIfam" id="TIGR00067">
    <property type="entry name" value="glut_race"/>
    <property type="match status" value="1"/>
</dbReference>
<dbReference type="PANTHER" id="PTHR21198">
    <property type="entry name" value="GLUTAMATE RACEMASE"/>
    <property type="match status" value="1"/>
</dbReference>
<dbReference type="PANTHER" id="PTHR21198:SF3">
    <property type="entry name" value="GLUTAMATE RACEMASE"/>
    <property type="match status" value="1"/>
</dbReference>
<dbReference type="Pfam" id="PF01177">
    <property type="entry name" value="Asp_Glu_race"/>
    <property type="match status" value="1"/>
</dbReference>
<dbReference type="SUPFAM" id="SSF53681">
    <property type="entry name" value="Aspartate/glutamate racemase"/>
    <property type="match status" value="2"/>
</dbReference>
<dbReference type="PROSITE" id="PS00923">
    <property type="entry name" value="ASP_GLU_RACEMASE_1"/>
    <property type="match status" value="1"/>
</dbReference>
<dbReference type="PROSITE" id="PS00924">
    <property type="entry name" value="ASP_GLU_RACEMASE_2"/>
    <property type="match status" value="1"/>
</dbReference>
<organism>
    <name type="scientific">Clostridium botulinum (strain Loch Maree / Type A3)</name>
    <dbReference type="NCBI Taxonomy" id="498214"/>
    <lineage>
        <taxon>Bacteria</taxon>
        <taxon>Bacillati</taxon>
        <taxon>Bacillota</taxon>
        <taxon>Clostridia</taxon>
        <taxon>Eubacteriales</taxon>
        <taxon>Clostridiaceae</taxon>
        <taxon>Clostridium</taxon>
    </lineage>
</organism>